<gene>
    <name type="primary">POLR2G</name>
</gene>
<accession>Q5E9B8</accession>
<reference key="1">
    <citation type="journal article" date="2005" name="BMC Genomics">
        <title>Characterization of 954 bovine full-CDS cDNA sequences.</title>
        <authorList>
            <person name="Harhay G.P."/>
            <person name="Sonstegard T.S."/>
            <person name="Keele J.W."/>
            <person name="Heaton M.P."/>
            <person name="Clawson M.L."/>
            <person name="Snelling W.M."/>
            <person name="Wiedmann R.T."/>
            <person name="Van Tassell C.P."/>
            <person name="Smith T.P.L."/>
        </authorList>
    </citation>
    <scope>NUCLEOTIDE SEQUENCE [LARGE SCALE MRNA]</scope>
</reference>
<reference key="2">
    <citation type="journal article" date="2006" name="Proc. Natl. Acad. Sci. U.S.A.">
        <title>A Mediator-responsive form of metazoan RNA polymerase II.</title>
        <authorList>
            <person name="Hu X."/>
            <person name="Malik S."/>
            <person name="Negroiu C.C."/>
            <person name="Hubbard K."/>
            <person name="Velalar C.N."/>
            <person name="Hampton B."/>
            <person name="Grosu D."/>
            <person name="Catalano J."/>
            <person name="Roeder R.G."/>
            <person name="Gnatt A."/>
        </authorList>
    </citation>
    <scope>FUNCTION OF POL II</scope>
    <scope>SUBUNIT</scope>
    <scope>IDENTIFICATION IN THE POL II AND POL II(G) COMPLEXES</scope>
</reference>
<reference key="3">
    <citation type="journal article" date="2016" name="Nature">
        <title>Structure of transcribing mammalian RNA polymerase II.</title>
        <authorList>
            <person name="Bernecky C."/>
            <person name="Herzog F."/>
            <person name="Baumeister W."/>
            <person name="Plitzko J.M."/>
            <person name="Cramer P."/>
        </authorList>
    </citation>
    <scope>STRUCTURE BY ELECTRON MICROSCOPY (3.40 ANGSTROMS)</scope>
    <scope>FUNCTION OF POL II</scope>
    <scope>SUBUNIT</scope>
</reference>
<reference key="4">
    <citation type="journal article" date="2017" name="Nat. Struct. Mol. Biol.">
        <title>Structure of a transcribing RNA polymerase II-DSIF complex reveals a multidentate DNA-RNA clamp.</title>
        <authorList>
            <person name="Bernecky C."/>
            <person name="Plitzko J.M."/>
            <person name="Cramer P."/>
        </authorList>
    </citation>
    <scope>STRUCTURE BY ELECTRON MICROSCOPY (3.70 ANGSTROMS)</scope>
    <scope>SUBUNIT</scope>
</reference>
<name>RPB7_BOVIN</name>
<comment type="function">
    <text evidence="1 3 4">Core component of RNA polymerase II (Pol II), a DNA-dependent RNA polymerase which synthesizes mRNA precursors and many functional non-coding RNAs using the four ribonucleoside triphosphates as substrates. Pol II is the central component of the basal RNA polymerase II transcription machinery. It is composed of mobile elements that move relative to each other. POLR2G/RPB7 is part of a subcomplex with POLR2D/RPB4 that binds to a pocket formed by POLR2A/RPB1, POLR2B/RPB2 and POLR2F/RPABC2 at the base of the clamp element. The POLR2D/RPB4-POLR2G/RPB7 subcomplex seems to lock the clamp via POLR2G/RPB7 in the closed conformation thus preventing double-stranded DNA to enter the active site cleft. The POLR2D/RPB4-POLR2G/RPB7 subcomplex binds single-stranded DNA and RNA.</text>
</comment>
<comment type="subunit">
    <text evidence="3 4 5">Component of the RNA polymerase II (Pol II) core complex consisting of 12 subunits: a ten-subunit catalytic core composed of POLR2A/RPB1, POLR2B/RPB2, POLR2C/RPB3, POLR2I/RPB9, POLR2J/RPB11, POLR2E/RPABC1, POLR2F/RPABC2, POLR2H/RPABC3, POLR2K/RPABC4 and POLR2L/RPABC5 and a mobile stalk composed of two subunits POLR2D/RPB4 and POLR2G/RPB7, protruding from the core and functioning primarily in transcription initiation. Part of Pol II(G) complex, in which Pol II core associates with an additional subunit POLR2M; unlike conventional Pol II, Pol II(G) functions as a transcriptional repressor. Part of TBP-based Pol II pre-initiation complex (PIC), in which Pol II core assembles with general transcription factors and other specific initiation factors including GTF2E1, GTF2E2, GTF2F1, GTF2F2, TCEA1, ERCC2, ERCC3, GTF2H2, GTF2H3, GTF2H4, GTF2H5, GTF2A1, GTF2A2, GTF2B and TBP; this large multi-subunit PIC complex mediates DNA unwinding and targets Pol II core to the transcription start site where the first phosphodiester bond forms.</text>
</comment>
<comment type="subcellular location">
    <subcellularLocation>
        <location evidence="2">Nucleus</location>
    </subcellularLocation>
</comment>
<comment type="similarity">
    <text evidence="6">Belongs to the eukaryotic RPB7/RPC8 RNA polymerase subunit family.</text>
</comment>
<evidence type="ECO:0000250" key="1">
    <source>
        <dbReference type="UniProtKB" id="P34087"/>
    </source>
</evidence>
<evidence type="ECO:0000250" key="2">
    <source>
        <dbReference type="UniProtKB" id="P62487"/>
    </source>
</evidence>
<evidence type="ECO:0000269" key="3">
    <source>
    </source>
</evidence>
<evidence type="ECO:0000269" key="4">
    <source>
    </source>
</evidence>
<evidence type="ECO:0000269" key="5">
    <source>
    </source>
</evidence>
<evidence type="ECO:0000305" key="6"/>
<evidence type="ECO:0007829" key="7">
    <source>
        <dbReference type="PDB" id="5FLM"/>
    </source>
</evidence>
<keyword id="KW-0002">3D-structure</keyword>
<keyword id="KW-0240">DNA-directed RNA polymerase</keyword>
<keyword id="KW-0539">Nucleus</keyword>
<keyword id="KW-1185">Reference proteome</keyword>
<keyword id="KW-0694">RNA-binding</keyword>
<keyword id="KW-0804">Transcription</keyword>
<dbReference type="EMBL" id="BT021002">
    <property type="protein sequence ID" value="AAX09019.1"/>
    <property type="molecule type" value="mRNA"/>
</dbReference>
<dbReference type="RefSeq" id="NP_001015633.1">
    <property type="nucleotide sequence ID" value="NM_001015633.1"/>
</dbReference>
<dbReference type="PDB" id="5FLM">
    <property type="method" value="EM"/>
    <property type="resolution" value="3.40 A"/>
    <property type="chains" value="G=1-172"/>
</dbReference>
<dbReference type="PDB" id="5OIK">
    <property type="method" value="EM"/>
    <property type="resolution" value="3.70 A"/>
    <property type="chains" value="G=1-172"/>
</dbReference>
<dbReference type="PDBsum" id="5FLM"/>
<dbReference type="PDBsum" id="5OIK"/>
<dbReference type="EMDB" id="EMD-3817"/>
<dbReference type="SMR" id="Q5E9B8"/>
<dbReference type="DIP" id="DIP-61192N"/>
<dbReference type="FunCoup" id="Q5E9B8">
    <property type="interactions" value="4556"/>
</dbReference>
<dbReference type="IntAct" id="Q5E9B8">
    <property type="interactions" value="3"/>
</dbReference>
<dbReference type="STRING" id="9913.ENSBTAP00000012481"/>
<dbReference type="PaxDb" id="9913-ENSBTAP00000012481"/>
<dbReference type="GeneID" id="526320"/>
<dbReference type="KEGG" id="bta:526320"/>
<dbReference type="CTD" id="5436"/>
<dbReference type="VEuPathDB" id="HostDB:ENSBTAG00000009483"/>
<dbReference type="eggNOG" id="KOG3298">
    <property type="taxonomic scope" value="Eukaryota"/>
</dbReference>
<dbReference type="HOGENOM" id="CLU_085878_2_0_1"/>
<dbReference type="InParanoid" id="Q5E9B8"/>
<dbReference type="OMA" id="TMRQPGL"/>
<dbReference type="OrthoDB" id="1162399at2759"/>
<dbReference type="TreeFam" id="TF103042"/>
<dbReference type="Reactome" id="R-BTA-112382">
    <property type="pathway name" value="Formation of RNA Pol II elongation complex"/>
</dbReference>
<dbReference type="Reactome" id="R-BTA-113418">
    <property type="pathway name" value="Formation of the Early Elongation Complex"/>
</dbReference>
<dbReference type="Reactome" id="R-BTA-5578749">
    <property type="pathway name" value="Transcriptional regulation by small RNAs"/>
</dbReference>
<dbReference type="Reactome" id="R-BTA-674695">
    <property type="pathway name" value="RNA Polymerase II Pre-transcription Events"/>
</dbReference>
<dbReference type="Reactome" id="R-BTA-6781823">
    <property type="pathway name" value="Formation of TC-NER Pre-Incision Complex"/>
</dbReference>
<dbReference type="Reactome" id="R-BTA-6782135">
    <property type="pathway name" value="Dual incision in TC-NER"/>
</dbReference>
<dbReference type="Reactome" id="R-BTA-6782210">
    <property type="pathway name" value="Gap-filling DNA repair synthesis and ligation in TC-NER"/>
</dbReference>
<dbReference type="Reactome" id="R-BTA-6796648">
    <property type="pathway name" value="TP53 Regulates Transcription of DNA Repair Genes"/>
</dbReference>
<dbReference type="Reactome" id="R-BTA-6803529">
    <property type="pathway name" value="FGFR2 alternative splicing"/>
</dbReference>
<dbReference type="Reactome" id="R-BTA-6807505">
    <property type="pathway name" value="RNA polymerase II transcribes snRNA genes"/>
</dbReference>
<dbReference type="Reactome" id="R-BTA-72086">
    <property type="pathway name" value="mRNA Capping"/>
</dbReference>
<dbReference type="Reactome" id="R-BTA-72163">
    <property type="pathway name" value="mRNA Splicing - Major Pathway"/>
</dbReference>
<dbReference type="Reactome" id="R-BTA-72165">
    <property type="pathway name" value="mRNA Splicing - Minor Pathway"/>
</dbReference>
<dbReference type="Reactome" id="R-BTA-72203">
    <property type="pathway name" value="Processing of Capped Intron-Containing Pre-mRNA"/>
</dbReference>
<dbReference type="Reactome" id="R-BTA-73776">
    <property type="pathway name" value="RNA Polymerase II Promoter Escape"/>
</dbReference>
<dbReference type="Reactome" id="R-BTA-73779">
    <property type="pathway name" value="RNA Polymerase II Transcription Pre-Initiation And Promoter Opening"/>
</dbReference>
<dbReference type="Reactome" id="R-BTA-75953">
    <property type="pathway name" value="RNA Polymerase II Transcription Initiation"/>
</dbReference>
<dbReference type="Reactome" id="R-BTA-75955">
    <property type="pathway name" value="RNA Polymerase II Transcription Elongation"/>
</dbReference>
<dbReference type="Reactome" id="R-BTA-76042">
    <property type="pathway name" value="RNA Polymerase II Transcription Initiation And Promoter Clearance"/>
</dbReference>
<dbReference type="Reactome" id="R-BTA-77075">
    <property type="pathway name" value="RNA Pol II CTD phosphorylation and interaction with CE"/>
</dbReference>
<dbReference type="Reactome" id="R-BTA-9018519">
    <property type="pathway name" value="Estrogen-dependent gene expression"/>
</dbReference>
<dbReference type="EvolutionaryTrace" id="Q5E9B8"/>
<dbReference type="Proteomes" id="UP000009136">
    <property type="component" value="Chromosome 29"/>
</dbReference>
<dbReference type="Bgee" id="ENSBTAG00000009483">
    <property type="expression patterns" value="Expressed in oocyte and 106 other cell types or tissues"/>
</dbReference>
<dbReference type="GO" id="GO:0005634">
    <property type="term" value="C:nucleus"/>
    <property type="evidence" value="ECO:0000250"/>
    <property type="project" value="UniProtKB"/>
</dbReference>
<dbReference type="GO" id="GO:0000932">
    <property type="term" value="C:P-body"/>
    <property type="evidence" value="ECO:0000318"/>
    <property type="project" value="GO_Central"/>
</dbReference>
<dbReference type="GO" id="GO:0005665">
    <property type="term" value="C:RNA polymerase II, core complex"/>
    <property type="evidence" value="ECO:0000314"/>
    <property type="project" value="UniProtKB"/>
</dbReference>
<dbReference type="GO" id="GO:0003697">
    <property type="term" value="F:single-stranded DNA binding"/>
    <property type="evidence" value="ECO:0000318"/>
    <property type="project" value="GO_Central"/>
</dbReference>
<dbReference type="GO" id="GO:0003727">
    <property type="term" value="F:single-stranded RNA binding"/>
    <property type="evidence" value="ECO:0000318"/>
    <property type="project" value="GO_Central"/>
</dbReference>
<dbReference type="GO" id="GO:0031369">
    <property type="term" value="F:translation initiation factor binding"/>
    <property type="evidence" value="ECO:0000318"/>
    <property type="project" value="GO_Central"/>
</dbReference>
<dbReference type="GO" id="GO:0000956">
    <property type="term" value="P:nuclear-transcribed mRNA catabolic process"/>
    <property type="evidence" value="ECO:0000318"/>
    <property type="project" value="GO_Central"/>
</dbReference>
<dbReference type="GO" id="GO:0060213">
    <property type="term" value="P:positive regulation of nuclear-transcribed mRNA poly(A) tail shortening"/>
    <property type="evidence" value="ECO:0000318"/>
    <property type="project" value="GO_Central"/>
</dbReference>
<dbReference type="GO" id="GO:0045948">
    <property type="term" value="P:positive regulation of translational initiation"/>
    <property type="evidence" value="ECO:0000318"/>
    <property type="project" value="GO_Central"/>
</dbReference>
<dbReference type="GO" id="GO:0006366">
    <property type="term" value="P:transcription by RNA polymerase II"/>
    <property type="evidence" value="ECO:0000250"/>
    <property type="project" value="UniProtKB"/>
</dbReference>
<dbReference type="GO" id="GO:0006367">
    <property type="term" value="P:transcription initiation at RNA polymerase II promoter"/>
    <property type="evidence" value="ECO:0000318"/>
    <property type="project" value="GO_Central"/>
</dbReference>
<dbReference type="CDD" id="cd04329">
    <property type="entry name" value="RNAP_II_Rpb7_N"/>
    <property type="match status" value="1"/>
</dbReference>
<dbReference type="CDD" id="cd04462">
    <property type="entry name" value="S1_RNAPII_Rpb7"/>
    <property type="match status" value="1"/>
</dbReference>
<dbReference type="FunFam" id="2.40.50.140:FF:000043">
    <property type="entry name" value="DNA-directed RNA polymerase II subunit RPB7"/>
    <property type="match status" value="1"/>
</dbReference>
<dbReference type="FunFam" id="3.30.1490.120:FF:000001">
    <property type="entry name" value="DNA-directed RNA polymerase II subunit RPB7"/>
    <property type="match status" value="1"/>
</dbReference>
<dbReference type="Gene3D" id="2.40.50.140">
    <property type="entry name" value="Nucleic acid-binding proteins"/>
    <property type="match status" value="1"/>
</dbReference>
<dbReference type="Gene3D" id="3.30.1490.120">
    <property type="entry name" value="RNA polymerase Rpb7-like, N-terminal domain"/>
    <property type="match status" value="1"/>
</dbReference>
<dbReference type="InterPro" id="IPR012340">
    <property type="entry name" value="NA-bd_OB-fold"/>
</dbReference>
<dbReference type="InterPro" id="IPR036898">
    <property type="entry name" value="RNA_pol_Rpb7-like_N_sf"/>
</dbReference>
<dbReference type="InterPro" id="IPR045113">
    <property type="entry name" value="Rpb7-like"/>
</dbReference>
<dbReference type="InterPro" id="IPR005576">
    <property type="entry name" value="Rpb7-like_N"/>
</dbReference>
<dbReference type="InterPro" id="IPR003029">
    <property type="entry name" value="S1_domain"/>
</dbReference>
<dbReference type="PANTHER" id="PTHR12709:SF4">
    <property type="entry name" value="DNA-DIRECTED RNA POLYMERASE II SUBUNIT RPB7"/>
    <property type="match status" value="1"/>
</dbReference>
<dbReference type="PANTHER" id="PTHR12709">
    <property type="entry name" value="DNA-DIRECTED RNA POLYMERASE II, III"/>
    <property type="match status" value="1"/>
</dbReference>
<dbReference type="Pfam" id="PF00575">
    <property type="entry name" value="S1"/>
    <property type="match status" value="1"/>
</dbReference>
<dbReference type="Pfam" id="PF03876">
    <property type="entry name" value="SHS2_Rpb7-N"/>
    <property type="match status" value="1"/>
</dbReference>
<dbReference type="SMART" id="SM00316">
    <property type="entry name" value="S1"/>
    <property type="match status" value="1"/>
</dbReference>
<dbReference type="SUPFAM" id="SSF88798">
    <property type="entry name" value="N-terminal, heterodimerisation domain of RBP7 (RpoE)"/>
    <property type="match status" value="1"/>
</dbReference>
<dbReference type="SUPFAM" id="SSF50249">
    <property type="entry name" value="Nucleic acid-binding proteins"/>
    <property type="match status" value="1"/>
</dbReference>
<protein>
    <recommendedName>
        <fullName>DNA-directed RNA polymerase II subunit RPB7</fullName>
        <shortName>RNA polymerase II subunit B7</shortName>
    </recommendedName>
    <alternativeName>
        <fullName>DNA-directed RNA polymerase II subunit G</fullName>
    </alternativeName>
</protein>
<feature type="chain" id="PRO_0000073985" description="DNA-directed RNA polymerase II subunit RPB7">
    <location>
        <begin position="1"/>
        <end position="172"/>
    </location>
</feature>
<feature type="strand" evidence="7">
    <location>
        <begin position="2"/>
        <end position="13"/>
    </location>
</feature>
<feature type="helix" evidence="7">
    <location>
        <begin position="15"/>
        <end position="17"/>
    </location>
</feature>
<feature type="helix" evidence="7">
    <location>
        <begin position="22"/>
        <end position="34"/>
    </location>
</feature>
<feature type="turn" evidence="7">
    <location>
        <begin position="40"/>
        <end position="42"/>
    </location>
</feature>
<feature type="strand" evidence="7">
    <location>
        <begin position="43"/>
        <end position="54"/>
    </location>
</feature>
<feature type="strand" evidence="7">
    <location>
        <begin position="57"/>
        <end position="59"/>
    </location>
</feature>
<feature type="strand" evidence="7">
    <location>
        <begin position="61"/>
        <end position="63"/>
    </location>
</feature>
<feature type="strand" evidence="7">
    <location>
        <begin position="66"/>
        <end position="77"/>
    </location>
</feature>
<feature type="strand" evidence="7">
    <location>
        <begin position="84"/>
        <end position="92"/>
    </location>
</feature>
<feature type="strand" evidence="7">
    <location>
        <begin position="94"/>
        <end position="101"/>
    </location>
</feature>
<feature type="strand" evidence="7">
    <location>
        <begin position="104"/>
        <end position="109"/>
    </location>
</feature>
<feature type="turn" evidence="7">
    <location>
        <begin position="110"/>
        <end position="112"/>
    </location>
</feature>
<feature type="strand" evidence="7">
    <location>
        <begin position="118"/>
        <end position="120"/>
    </location>
</feature>
<feature type="strand" evidence="7">
    <location>
        <begin position="123"/>
        <end position="125"/>
    </location>
</feature>
<feature type="strand" evidence="7">
    <location>
        <begin position="127"/>
        <end position="129"/>
    </location>
</feature>
<feature type="strand" evidence="7">
    <location>
        <begin position="133"/>
        <end position="137"/>
    </location>
</feature>
<feature type="strand" evidence="7">
    <location>
        <begin position="142"/>
        <end position="153"/>
    </location>
</feature>
<feature type="strand" evidence="7">
    <location>
        <begin position="156"/>
        <end position="162"/>
    </location>
</feature>
<feature type="strand" evidence="7">
    <location>
        <begin position="165"/>
        <end position="167"/>
    </location>
</feature>
<proteinExistence type="evidence at protein level"/>
<sequence length="172" mass="19294">MFYHISLEHEILLHPRYFGPNLLNTVKQKLFTEVEGTCTGKYGFVIAVTTIDNIGAGVIQPGRGFVLYPVKYKAIVFRPFKGEVVDAVVTQVNKVGLFTEIGPMSCFISRHSIPSEMEFDPNSNPPCYKTMDEDIVIQQDDEIRLKIVGTRVDKNDIFAIGSLMDDYLGLVS</sequence>
<organism>
    <name type="scientific">Bos taurus</name>
    <name type="common">Bovine</name>
    <dbReference type="NCBI Taxonomy" id="9913"/>
    <lineage>
        <taxon>Eukaryota</taxon>
        <taxon>Metazoa</taxon>
        <taxon>Chordata</taxon>
        <taxon>Craniata</taxon>
        <taxon>Vertebrata</taxon>
        <taxon>Euteleostomi</taxon>
        <taxon>Mammalia</taxon>
        <taxon>Eutheria</taxon>
        <taxon>Laurasiatheria</taxon>
        <taxon>Artiodactyla</taxon>
        <taxon>Ruminantia</taxon>
        <taxon>Pecora</taxon>
        <taxon>Bovidae</taxon>
        <taxon>Bovinae</taxon>
        <taxon>Bos</taxon>
    </lineage>
</organism>